<protein>
    <recommendedName>
        <fullName>Probable arabinosyltransferase ARAD1</fullName>
        <ecNumber>2.4.2.-</ecNumber>
    </recommendedName>
    <alternativeName>
        <fullName>Arabinan alpha-1,5-arabinosyltransferase</fullName>
    </alternativeName>
    <alternativeName>
        <fullName>L-Arabinosyltransferase</fullName>
    </alternativeName>
    <alternativeName>
        <fullName>Protein ARABINAN DEFICIENT 1</fullName>
    </alternativeName>
</protein>
<evidence type="ECO:0000255" key="1"/>
<evidence type="ECO:0000256" key="2">
    <source>
        <dbReference type="SAM" id="MobiDB-lite"/>
    </source>
</evidence>
<evidence type="ECO:0000269" key="3">
    <source>
    </source>
</evidence>
<evidence type="ECO:0000269" key="4">
    <source>
    </source>
</evidence>
<evidence type="ECO:0000269" key="5">
    <source>
    </source>
</evidence>
<evidence type="ECO:0000305" key="6"/>
<evidence type="ECO:0000305" key="7">
    <source>
    </source>
</evidence>
<proteinExistence type="evidence at protein level"/>
<keyword id="KW-0961">Cell wall biogenesis/degradation</keyword>
<keyword id="KW-0325">Glycoprotein</keyword>
<keyword id="KW-0328">Glycosyltransferase</keyword>
<keyword id="KW-0333">Golgi apparatus</keyword>
<keyword id="KW-0472">Membrane</keyword>
<keyword id="KW-1185">Reference proteome</keyword>
<keyword id="KW-0735">Signal-anchor</keyword>
<keyword id="KW-0808">Transferase</keyword>
<keyword id="KW-0812">Transmembrane</keyword>
<keyword id="KW-1133">Transmembrane helix</keyword>
<reference key="1">
    <citation type="submission" date="2014-01" db="EMBL/GenBank/DDBJ databases">
        <title>The plant glycosyltransferase clone collection for high-throughput functional genomics.</title>
        <authorList>
            <person name="Lao J."/>
            <person name="Oikawa A."/>
            <person name="Bromley J.R."/>
            <person name="Smith-Moritz A.M."/>
            <person name="Chiu T.-Y."/>
            <person name="Christiansen K.M."/>
            <person name="Hansen S.F."/>
            <person name="Suttangkakul A."/>
            <person name="Ebert B."/>
            <person name="Yang F."/>
            <person name="Vega-Sanchez M.E."/>
            <person name="Stonebloom S."/>
            <person name="Morrison S."/>
            <person name="McInerney P."/>
            <person name="Hadi M."/>
            <person name="Adams P.D."/>
            <person name="Ronald P.C."/>
            <person name="Loque D."/>
            <person name="Scheller H.V."/>
            <person name="Heazlewood J.L."/>
        </authorList>
    </citation>
    <scope>NUCLEOTIDE SEQUENCE [MRNA]</scope>
    <source>
        <strain>cv. Columbia</strain>
    </source>
</reference>
<reference key="2">
    <citation type="journal article" date="1999" name="Nature">
        <title>Sequence and analysis of chromosome 2 of the plant Arabidopsis thaliana.</title>
        <authorList>
            <person name="Lin X."/>
            <person name="Kaul S."/>
            <person name="Rounsley S.D."/>
            <person name="Shea T.P."/>
            <person name="Benito M.-I."/>
            <person name="Town C.D."/>
            <person name="Fujii C.Y."/>
            <person name="Mason T.M."/>
            <person name="Bowman C.L."/>
            <person name="Barnstead M.E."/>
            <person name="Feldblyum T.V."/>
            <person name="Buell C.R."/>
            <person name="Ketchum K.A."/>
            <person name="Lee J.J."/>
            <person name="Ronning C.M."/>
            <person name="Koo H.L."/>
            <person name="Moffat K.S."/>
            <person name="Cronin L.A."/>
            <person name="Shen M."/>
            <person name="Pai G."/>
            <person name="Van Aken S."/>
            <person name="Umayam L."/>
            <person name="Tallon L.J."/>
            <person name="Gill J.E."/>
            <person name="Adams M.D."/>
            <person name="Carrera A.J."/>
            <person name="Creasy T.H."/>
            <person name="Goodman H.M."/>
            <person name="Somerville C.R."/>
            <person name="Copenhaver G.P."/>
            <person name="Preuss D."/>
            <person name="Nierman W.C."/>
            <person name="White O."/>
            <person name="Eisen J.A."/>
            <person name="Salzberg S.L."/>
            <person name="Fraser C.M."/>
            <person name="Venter J.C."/>
        </authorList>
    </citation>
    <scope>NUCLEOTIDE SEQUENCE [LARGE SCALE GENOMIC DNA]</scope>
    <source>
        <strain>cv. Columbia</strain>
    </source>
</reference>
<reference key="3">
    <citation type="journal article" date="2017" name="Plant J.">
        <title>Araport11: a complete reannotation of the Arabidopsis thaliana reference genome.</title>
        <authorList>
            <person name="Cheng C.Y."/>
            <person name="Krishnakumar V."/>
            <person name="Chan A.P."/>
            <person name="Thibaud-Nissen F."/>
            <person name="Schobel S."/>
            <person name="Town C.D."/>
        </authorList>
    </citation>
    <scope>GENOME REANNOTATION</scope>
    <source>
        <strain>cv. Columbia</strain>
    </source>
</reference>
<reference key="4">
    <citation type="submission" date="2004-10" db="EMBL/GenBank/DDBJ databases">
        <title>Arabidopsis ORF clones.</title>
        <authorList>
            <person name="Kim C.J."/>
            <person name="Chen H."/>
            <person name="Cheuk R.F."/>
            <person name="Shinn P."/>
            <person name="Ecker J.R."/>
        </authorList>
    </citation>
    <scope>NUCLEOTIDE SEQUENCE [LARGE SCALE MRNA]</scope>
    <source>
        <strain>cv. Columbia</strain>
    </source>
</reference>
<reference key="5">
    <citation type="submission" date="2006-07" db="EMBL/GenBank/DDBJ databases">
        <title>Large-scale analysis of RIKEN Arabidopsis full-length (RAFL) cDNAs.</title>
        <authorList>
            <person name="Totoki Y."/>
            <person name="Seki M."/>
            <person name="Ishida J."/>
            <person name="Nakajima M."/>
            <person name="Enju A."/>
            <person name="Kamiya A."/>
            <person name="Narusaka M."/>
            <person name="Shin-i T."/>
            <person name="Nakagawa M."/>
            <person name="Sakamoto N."/>
            <person name="Oishi K."/>
            <person name="Kohara Y."/>
            <person name="Kobayashi M."/>
            <person name="Toyoda A."/>
            <person name="Sakaki Y."/>
            <person name="Sakurai T."/>
            <person name="Iida K."/>
            <person name="Akiyama K."/>
            <person name="Satou M."/>
            <person name="Toyoda T."/>
            <person name="Konagaya A."/>
            <person name="Carninci P."/>
            <person name="Kawai J."/>
            <person name="Hayashizaki Y."/>
            <person name="Shinozaki K."/>
        </authorList>
    </citation>
    <scope>NUCLEOTIDE SEQUENCE [LARGE SCALE MRNA]</scope>
    <source>
        <strain>cv. Columbia</strain>
    </source>
</reference>
<reference key="6">
    <citation type="journal article" date="2006" name="Plant Physiol.">
        <title>ARABINAN DEFICIENT 1 is a putative arabinosyltransferase involved in biosynthesis of pectic arabinan in Arabidopsis.</title>
        <authorList>
            <person name="Harholt J."/>
            <person name="Jensen J.K."/>
            <person name="Sorensen S.O."/>
            <person name="Orfila C."/>
            <person name="Pauly M."/>
            <person name="Scheller H.V."/>
        </authorList>
    </citation>
    <scope>FUNCTION</scope>
    <scope>TISSUE SPECIFICITY</scope>
    <scope>DISRUPTION PHENOTYPE</scope>
</reference>
<reference key="7">
    <citation type="journal article" date="2012" name="Planta">
        <title>ARAD proteins associated with pectic Arabinan biosynthesis form complexes when transiently overexpressed in planta.</title>
        <authorList>
            <person name="Harholt J."/>
            <person name="Jensen J.K."/>
            <person name="Verhertbruggen Y."/>
            <person name="Sogaard C."/>
            <person name="Bernard S."/>
            <person name="Nafisi M."/>
            <person name="Poulsen C.P."/>
            <person name="Geshi N."/>
            <person name="Sakuragi Y."/>
            <person name="Driouich A."/>
            <person name="Knox J.P."/>
            <person name="Scheller H.V."/>
        </authorList>
    </citation>
    <scope>FUNCTION</scope>
    <scope>SUBUNIT</scope>
    <scope>SUBCELLULAR LOCATION</scope>
</reference>
<reference key="8">
    <citation type="journal article" date="2013" name="Plant Cell Physiol.">
        <title>Cell wall pectic arabinans influence the mechanical properties of Arabidopsis thaliana inflorescence stems and their response to mechanical stress.</title>
        <authorList>
            <person name="Verhertbruggen Y."/>
            <person name="Marcus S.E."/>
            <person name="Chen J."/>
            <person name="Knox J.P."/>
        </authorList>
    </citation>
    <scope>FUNCTION</scope>
</reference>
<sequence>MARKSSLLKRAAIAVVSVIAIYVILNASVSRSLPSSSDLPRQLIREDDDDEGRAPIQPRVRVYMYNLPKRFTYGLIEQHSIARGGIKKPVGDVTTLKYPGHQHMHEWYLFSDLNQPEVDRSGSPIVRVSDPADADLFYVPVFSSLSLIVNAGRPVEAGSGYSDEKMQEGLVEWLEGQEWWRRNAGRDHVIPAGDPNALYRILDRVKNAVLLVSDFGRLRPDQGSFVKDVVIPYSHRVNLFNGEIGVEDRNTLLFFMGNRYRKDGGKVRDLLFQVLEKEDDVTIKHGTQSRENRRAATKGMHTSKFCLNPAGDTPSACRLFDSIVSLCVPLIVSDSIELPFEDVIDYRKFSIFVEANAALQPGFLVQMLRKIKTKKILEYQREMKSVRRYFDYDNPNGAVKEIWRQVSHKLPLIKLMSNRDRRLVLRNLTEPNCSCLCTNQTGLITSI</sequence>
<organism>
    <name type="scientific">Arabidopsis thaliana</name>
    <name type="common">Mouse-ear cress</name>
    <dbReference type="NCBI Taxonomy" id="3702"/>
    <lineage>
        <taxon>Eukaryota</taxon>
        <taxon>Viridiplantae</taxon>
        <taxon>Streptophyta</taxon>
        <taxon>Embryophyta</taxon>
        <taxon>Tracheophyta</taxon>
        <taxon>Spermatophyta</taxon>
        <taxon>Magnoliopsida</taxon>
        <taxon>eudicotyledons</taxon>
        <taxon>Gunneridae</taxon>
        <taxon>Pentapetalae</taxon>
        <taxon>rosids</taxon>
        <taxon>malvids</taxon>
        <taxon>Brassicales</taxon>
        <taxon>Brassicaceae</taxon>
        <taxon>Camelineae</taxon>
        <taxon>Arabidopsis</taxon>
    </lineage>
</organism>
<feature type="chain" id="PRO_0000429125" description="Probable arabinosyltransferase ARAD1">
    <location>
        <begin position="1"/>
        <end position="447"/>
    </location>
</feature>
<feature type="topological domain" description="Cytoplasmic" evidence="1">
    <location>
        <begin position="1"/>
        <end position="6"/>
    </location>
</feature>
<feature type="transmembrane region" description="Helical; Signal-anchor for type II membrane protein" evidence="1">
    <location>
        <begin position="7"/>
        <end position="29"/>
    </location>
</feature>
<feature type="topological domain" description="Lumenal" evidence="1">
    <location>
        <begin position="30"/>
        <end position="447"/>
    </location>
</feature>
<feature type="region of interest" description="Disordered" evidence="2">
    <location>
        <begin position="32"/>
        <end position="52"/>
    </location>
</feature>
<feature type="compositionally biased region" description="Low complexity" evidence="2">
    <location>
        <begin position="32"/>
        <end position="41"/>
    </location>
</feature>
<feature type="glycosylation site" description="N-linked (GlcNAc...) asparagine" evidence="1">
    <location>
        <position position="427"/>
    </location>
</feature>
<feature type="glycosylation site" description="N-linked (GlcNAc...) asparagine" evidence="1">
    <location>
        <position position="432"/>
    </location>
</feature>
<feature type="glycosylation site" description="N-linked (GlcNAc...) asparagine" evidence="1">
    <location>
        <position position="439"/>
    </location>
</feature>
<name>ARAD1_ARATH</name>
<comment type="function">
    <text evidence="3 4 5">Probable arabinosyl transferase responsible for the polymerization of arabinose into the arabinan of arabinogalactan. May function as inverting enzyme using UDP-beta-L-arabinopyranoside. May be important for arabinan side chains of rhamnogalacturonan I (RG-I), a major component of pectins. Cell wall pectic arabinans are involved in thigmomorphogenesis response of inflorescence stems to mechanical stress.</text>
</comment>
<comment type="subunit">
    <text evidence="4">Homodimer and heterodimer with ARAD2.</text>
</comment>
<comment type="subcellular location">
    <subcellularLocation>
        <location evidence="7">Golgi apparatus membrane</location>
        <topology evidence="6">Single-pass type II membrane protein</topology>
    </subcellularLocation>
</comment>
<comment type="tissue specificity">
    <text evidence="3">Expressed in root vasculature, cotyledons, leaves, stems, vascular tissue of sepals, petals and stamens, pollen grains, mature siliques and abscission region of seeds.</text>
</comment>
<comment type="disruption phenotype">
    <text evidence="3">No visible phenotype under normal growth conditions, but mutant plants have strong reduction of arabinose content in leaves and stems due to a decreased content of pectic arabinan.</text>
</comment>
<comment type="similarity">
    <text evidence="6">Belongs to the glycosyltransferase 47 family.</text>
</comment>
<comment type="sequence caution" evidence="6">
    <conflict type="erroneous gene model prediction">
        <sequence resource="EMBL-CDS" id="AAC61825"/>
    </conflict>
</comment>
<dbReference type="EC" id="2.4.2.-"/>
<dbReference type="EMBL" id="KJ138874">
    <property type="protein sequence ID" value="AHL38814.1"/>
    <property type="molecule type" value="mRNA"/>
</dbReference>
<dbReference type="EMBL" id="AC004667">
    <property type="protein sequence ID" value="AAC61825.1"/>
    <property type="status" value="ALT_SEQ"/>
    <property type="molecule type" value="Genomic_DNA"/>
</dbReference>
<dbReference type="EMBL" id="CP002685">
    <property type="protein sequence ID" value="AEC09064.1"/>
    <property type="molecule type" value="Genomic_DNA"/>
</dbReference>
<dbReference type="EMBL" id="BT015054">
    <property type="protein sequence ID" value="AAT71926.1"/>
    <property type="molecule type" value="mRNA"/>
</dbReference>
<dbReference type="EMBL" id="BT015854">
    <property type="protein sequence ID" value="AAU94417.1"/>
    <property type="molecule type" value="mRNA"/>
</dbReference>
<dbReference type="EMBL" id="AK228986">
    <property type="protein sequence ID" value="BAF00874.1"/>
    <property type="molecule type" value="mRNA"/>
</dbReference>
<dbReference type="PIR" id="F84764">
    <property type="entry name" value="F84764"/>
</dbReference>
<dbReference type="RefSeq" id="NP_850241.1">
    <property type="nucleotide sequence ID" value="NM_179910.3"/>
</dbReference>
<dbReference type="SMR" id="Q6DBG8"/>
<dbReference type="BioGRID" id="3422">
    <property type="interactions" value="2"/>
</dbReference>
<dbReference type="FunCoup" id="Q6DBG8">
    <property type="interactions" value="1034"/>
</dbReference>
<dbReference type="STRING" id="3702.Q6DBG8"/>
<dbReference type="CAZy" id="GT47">
    <property type="family name" value="Glycosyltransferase Family 47"/>
</dbReference>
<dbReference type="GlyCosmos" id="Q6DBG8">
    <property type="glycosylation" value="3 sites, No reported glycans"/>
</dbReference>
<dbReference type="GlyGen" id="Q6DBG8">
    <property type="glycosylation" value="3 sites"/>
</dbReference>
<dbReference type="iPTMnet" id="Q6DBG8"/>
<dbReference type="PaxDb" id="3702-AT2G35100.1"/>
<dbReference type="ProteomicsDB" id="246953"/>
<dbReference type="EnsemblPlants" id="AT2G35100.1">
    <property type="protein sequence ID" value="AT2G35100.1"/>
    <property type="gene ID" value="AT2G35100"/>
</dbReference>
<dbReference type="GeneID" id="818076"/>
<dbReference type="Gramene" id="AT2G35100.1">
    <property type="protein sequence ID" value="AT2G35100.1"/>
    <property type="gene ID" value="AT2G35100"/>
</dbReference>
<dbReference type="KEGG" id="ath:AT2G35100"/>
<dbReference type="Araport" id="AT2G35100"/>
<dbReference type="TAIR" id="AT2G35100">
    <property type="gene designation" value="ARAD1"/>
</dbReference>
<dbReference type="eggNOG" id="KOG1021">
    <property type="taxonomic scope" value="Eukaryota"/>
</dbReference>
<dbReference type="HOGENOM" id="CLU_033763_1_1_1"/>
<dbReference type="InParanoid" id="Q6DBG8"/>
<dbReference type="OMA" id="MATRGMH"/>
<dbReference type="OrthoDB" id="1924787at2759"/>
<dbReference type="PhylomeDB" id="Q6DBG8"/>
<dbReference type="PRO" id="PR:Q6DBG8"/>
<dbReference type="Proteomes" id="UP000006548">
    <property type="component" value="Chromosome 2"/>
</dbReference>
<dbReference type="ExpressionAtlas" id="Q6DBG8">
    <property type="expression patterns" value="baseline and differential"/>
</dbReference>
<dbReference type="GO" id="GO:0005768">
    <property type="term" value="C:endosome"/>
    <property type="evidence" value="ECO:0007005"/>
    <property type="project" value="TAIR"/>
</dbReference>
<dbReference type="GO" id="GO:0005794">
    <property type="term" value="C:Golgi apparatus"/>
    <property type="evidence" value="ECO:0000314"/>
    <property type="project" value="TAIR"/>
</dbReference>
<dbReference type="GO" id="GO:0000139">
    <property type="term" value="C:Golgi membrane"/>
    <property type="evidence" value="ECO:0007669"/>
    <property type="project" value="UniProtKB-SubCell"/>
</dbReference>
<dbReference type="GO" id="GO:0000138">
    <property type="term" value="C:Golgi trans cisterna"/>
    <property type="evidence" value="ECO:0000314"/>
    <property type="project" value="TAIR"/>
</dbReference>
<dbReference type="GO" id="GO:0005802">
    <property type="term" value="C:trans-Golgi network"/>
    <property type="evidence" value="ECO:0007005"/>
    <property type="project" value="TAIR"/>
</dbReference>
<dbReference type="GO" id="GO:0016757">
    <property type="term" value="F:glycosyltransferase activity"/>
    <property type="evidence" value="ECO:0000250"/>
    <property type="project" value="TAIR"/>
</dbReference>
<dbReference type="GO" id="GO:0071555">
    <property type="term" value="P:cell wall organization"/>
    <property type="evidence" value="ECO:0007669"/>
    <property type="project" value="UniProtKB-KW"/>
</dbReference>
<dbReference type="GO" id="GO:0045489">
    <property type="term" value="P:pectin biosynthetic process"/>
    <property type="evidence" value="ECO:0000315"/>
    <property type="project" value="TAIR"/>
</dbReference>
<dbReference type="GO" id="GO:0006486">
    <property type="term" value="P:protein glycosylation"/>
    <property type="evidence" value="ECO:0007669"/>
    <property type="project" value="InterPro"/>
</dbReference>
<dbReference type="InterPro" id="IPR004263">
    <property type="entry name" value="Exostosin"/>
</dbReference>
<dbReference type="InterPro" id="IPR040911">
    <property type="entry name" value="Exostosin_GT47"/>
</dbReference>
<dbReference type="PANTHER" id="PTHR11062:SF50">
    <property type="entry name" value="ARABINOSYLTRANSFERASE ARAD1-RELATED"/>
    <property type="match status" value="1"/>
</dbReference>
<dbReference type="PANTHER" id="PTHR11062">
    <property type="entry name" value="EXOSTOSIN HEPARAN SULFATE GLYCOSYLTRANSFERASE -RELATED"/>
    <property type="match status" value="1"/>
</dbReference>
<dbReference type="Pfam" id="PF03016">
    <property type="entry name" value="Exostosin_GT47"/>
    <property type="match status" value="1"/>
</dbReference>
<accession>Q6DBG8</accession>
<accession>O82181</accession>
<gene>
    <name type="primary">ARAD1</name>
    <name type="ordered locus">At2g35100</name>
    <name type="ORF">T4C15</name>
</gene>